<evidence type="ECO:0000255" key="1">
    <source>
        <dbReference type="HAMAP-Rule" id="MF_04040"/>
    </source>
</evidence>
<evidence type="ECO:0000256" key="2">
    <source>
        <dbReference type="SAM" id="MobiDB-lite"/>
    </source>
</evidence>
<dbReference type="EMBL" id="AF206304">
    <property type="protein sequence ID" value="AAF61650.1"/>
    <property type="molecule type" value="Genomic_DNA"/>
</dbReference>
<dbReference type="EMBL" id="AB097932">
    <property type="status" value="NOT_ANNOTATED_CDS"/>
    <property type="molecule type" value="Genomic_DNA"/>
</dbReference>
<dbReference type="EMBL" id="AB097933">
    <property type="status" value="NOT_ANNOTATED_CDS"/>
    <property type="molecule type" value="Genomic_DNA"/>
</dbReference>
<dbReference type="EMBL" id="DQ008354">
    <property type="protein sequence ID" value="AAY57658.1"/>
    <property type="molecule type" value="Genomic_DNA"/>
</dbReference>
<dbReference type="EMBL" id="DQ008355">
    <property type="protein sequence ID" value="AAY57729.1"/>
    <property type="molecule type" value="Genomic_DNA"/>
</dbReference>
<dbReference type="RefSeq" id="NP_040171.1">
    <property type="nucleotide sequence ID" value="NC_001348.1"/>
</dbReference>
<dbReference type="IntAct" id="Q77NP3">
    <property type="interactions" value="4"/>
</dbReference>
<dbReference type="MINT" id="Q77NP3"/>
<dbReference type="GeneID" id="1487656"/>
<dbReference type="KEGG" id="vg:1487656"/>
<dbReference type="Proteomes" id="UP000002603">
    <property type="component" value="Genome"/>
</dbReference>
<dbReference type="Proteomes" id="UP000008504">
    <property type="component" value="Genome"/>
</dbReference>
<dbReference type="Proteomes" id="UP000008505">
    <property type="component" value="Genome"/>
</dbReference>
<dbReference type="Proteomes" id="UP000008506">
    <property type="component" value="Genome"/>
</dbReference>
<dbReference type="GO" id="GO:0044178">
    <property type="term" value="C:host cell Golgi membrane"/>
    <property type="evidence" value="ECO:0007669"/>
    <property type="project" value="UniProtKB-SubCell"/>
</dbReference>
<dbReference type="GO" id="GO:0020002">
    <property type="term" value="C:host cell plasma membrane"/>
    <property type="evidence" value="ECO:0007669"/>
    <property type="project" value="UniProtKB-SubCell"/>
</dbReference>
<dbReference type="GO" id="GO:0016020">
    <property type="term" value="C:membrane"/>
    <property type="evidence" value="ECO:0007669"/>
    <property type="project" value="UniProtKB-KW"/>
</dbReference>
<dbReference type="GO" id="GO:0019033">
    <property type="term" value="C:viral tegument"/>
    <property type="evidence" value="ECO:0007669"/>
    <property type="project" value="UniProtKB-SubCell"/>
</dbReference>
<dbReference type="GO" id="GO:0055036">
    <property type="term" value="C:virion membrane"/>
    <property type="evidence" value="ECO:0007669"/>
    <property type="project" value="UniProtKB-SubCell"/>
</dbReference>
<dbReference type="GO" id="GO:0009653">
    <property type="term" value="P:anatomical structure morphogenesis"/>
    <property type="evidence" value="ECO:0007669"/>
    <property type="project" value="UniProtKB-UniRule"/>
</dbReference>
<dbReference type="GO" id="GO:0046760">
    <property type="term" value="P:viral budding from Golgi membrane"/>
    <property type="evidence" value="ECO:0007669"/>
    <property type="project" value="UniProtKB-UniRule"/>
</dbReference>
<dbReference type="HAMAP" id="MF_04040">
    <property type="entry name" value="HSV_CEP3_alphahv"/>
    <property type="match status" value="1"/>
</dbReference>
<dbReference type="InterPro" id="IPR024351">
    <property type="entry name" value="Tegument_UL11_Herpesvir"/>
</dbReference>
<dbReference type="Pfam" id="PF11094">
    <property type="entry name" value="UL11"/>
    <property type="match status" value="1"/>
</dbReference>
<organism>
    <name type="scientific">Varicella-zoster virus (strain Oka vaccine)</name>
    <name type="common">HHV-3</name>
    <name type="synonym">Human herpesvirus 3</name>
    <dbReference type="NCBI Taxonomy" id="341980"/>
    <lineage>
        <taxon>Viruses</taxon>
        <taxon>Duplodnaviria</taxon>
        <taxon>Heunggongvirae</taxon>
        <taxon>Peploviricota</taxon>
        <taxon>Herviviricetes</taxon>
        <taxon>Herpesvirales</taxon>
        <taxon>Orthoherpesviridae</taxon>
        <taxon>Alphaherpesvirinae</taxon>
        <taxon>Varicellovirus</taxon>
        <taxon>Varicellovirus humanalpha3</taxon>
        <taxon>Human herpesvirus 3</taxon>
    </lineage>
</organism>
<keyword id="KW-1032">Host cell membrane</keyword>
<keyword id="KW-1040">Host Golgi apparatus</keyword>
<keyword id="KW-1043">Host membrane</keyword>
<keyword id="KW-0449">Lipoprotein</keyword>
<keyword id="KW-0472">Membrane</keyword>
<keyword id="KW-0519">Myristate</keyword>
<keyword id="KW-0564">Palmitate</keyword>
<keyword id="KW-0597">Phosphoprotein</keyword>
<keyword id="KW-0946">Virion</keyword>
<keyword id="KW-0920">Virion tegument</keyword>
<sequence>MGQSSSSGRGGICGLCKRYNELVTCNGETVALNSEFFEDFDFDENVTEDADKSTQRRPRVIDVTPKRKPSGKSSHSKCAKC</sequence>
<feature type="initiator methionine" description="Removed; by host" evidence="1">
    <location>
        <position position="1"/>
    </location>
</feature>
<feature type="chain" id="PRO_0000385490" description="Cytoplasmic envelopment protein 3" evidence="1">
    <location>
        <begin position="2"/>
        <end position="81"/>
    </location>
</feature>
<feature type="region of interest" description="Asp/Glu-rich (acidic)" evidence="1">
    <location>
        <begin position="41"/>
        <end position="47"/>
    </location>
</feature>
<feature type="region of interest" description="Disordered" evidence="2">
    <location>
        <begin position="47"/>
        <end position="81"/>
    </location>
</feature>
<feature type="short sequence motif" description="Di-leucine-like internalization motif" evidence="1">
    <location>
        <begin position="22"/>
        <end position="23"/>
    </location>
</feature>
<feature type="compositionally biased region" description="Basic residues" evidence="2">
    <location>
        <begin position="66"/>
        <end position="81"/>
    </location>
</feature>
<feature type="lipid moiety-binding region" description="N-myristoyl glycine; by host" evidence="1">
    <location>
        <position position="2"/>
    </location>
</feature>
<protein>
    <recommendedName>
        <fullName evidence="1">Cytoplasmic envelopment protein 3</fullName>
    </recommendedName>
</protein>
<organismHost>
    <name type="scientific">Homo sapiens</name>
    <name type="common">Human</name>
    <dbReference type="NCBI Taxonomy" id="9606"/>
</organismHost>
<comment type="function">
    <text evidence="1">Plays an important role in the cytoplasmic envelopment of tegument proteins and capsids during the assembly and egress processes. Also participates in viral entry at the fusion step probably by regulating the core fusion machinery.</text>
</comment>
<comment type="subunit">
    <text evidence="1">Interacts with cytoplasmic envelopment protein 2; this interaction is essential for the proper localization of each protein to the assembly complex and thus for the production of infectious virus.</text>
</comment>
<comment type="subcellular location">
    <subcellularLocation>
        <location evidence="1">Virion tegument</location>
    </subcellularLocation>
    <subcellularLocation>
        <location evidence="1">Virion membrane</location>
        <topology evidence="1">Lipid-anchor</topology>
    </subcellularLocation>
    <subcellularLocation>
        <location evidence="1">Host cell membrane</location>
        <topology evidence="1">Lipid-anchor</topology>
        <orientation evidence="1">Cytoplasmic side</orientation>
    </subcellularLocation>
    <subcellularLocation>
        <location evidence="1">Host Golgi apparatus membrane</location>
        <topology evidence="1">Lipid-anchor</topology>
        <orientation evidence="1">Cytoplasmic side</orientation>
    </subcellularLocation>
    <text evidence="1">Virion membrane-associated tegument protein. Associates with host membrane lipids rafts. During virion morphogenesis, this protein probably accumulates in the endosomes and trans-Golgi where secondary envelopment occurs. It is probably transported to the cell surface from where it is endocytosed and directed to the trans-Golgi network (TGN).</text>
</comment>
<comment type="PTM">
    <text evidence="1">Myristoylation and palmitoylation (probably on one or more of the nearby cysteines at the N-terminus) enable membrane-binding and Golgi apparatus-specific targeting and are essential for efficient packaging.</text>
</comment>
<comment type="PTM">
    <text evidence="1">Phosphorylated. Phosphorylation does not seem to be required for recycling to the host Golgi apparatus. Packaging is selective for underphosphorylated forms.</text>
</comment>
<comment type="similarity">
    <text evidence="1">Belongs to the herpesviridae cytoplasmic envelopment protein 3 family.</text>
</comment>
<proteinExistence type="inferred from homology"/>
<name>CEP3_VZVO</name>
<reference key="1">
    <citation type="journal article" date="2000" name="J. Infect. Dis.">
        <title>Nucleotide sequences that distinguish Oka vaccine from parental Oka and other varicella-zoster virus isolates.</title>
        <authorList>
            <person name="Argaw T."/>
            <person name="Cohen J.I."/>
            <person name="Klutch M."/>
            <person name="Lekstrom K."/>
            <person name="Yoshikawa T."/>
            <person name="Asano Y."/>
            <person name="Krause P.R."/>
        </authorList>
    </citation>
    <scope>NUCLEOTIDE SEQUENCE [GENOMIC DNA]</scope>
</reference>
<reference key="2">
    <citation type="journal article" date="2002" name="J. Virol.">
        <title>Comparison of the complete DNA sequences of the Oka varicella vaccine and its parental virus.</title>
        <authorList>
            <person name="Gomi Y."/>
            <person name="Sunamachi H."/>
            <person name="Mori Y."/>
            <person name="Nagaike K."/>
            <person name="Takahashi M."/>
            <person name="Yamanishi K."/>
        </authorList>
    </citation>
    <scope>NUCLEOTIDE SEQUENCE [LARGE SCALE GENOMIC DNA]</scope>
    <source>
        <strain>Isolate Human/Japan/P-Oka/1970</strain>
        <strain>Oka varicella vaccine Biken (V-Oka-Biken)</strain>
    </source>
</reference>
<reference key="3">
    <citation type="journal article" date="2008" name="J. Virol.">
        <title>Complete DNA sequences of two oka strain varicella-zoster virus genomes.</title>
        <authorList>
            <person name="Tillieux S.L."/>
            <person name="Halsey W.S."/>
            <person name="Thomas E.S."/>
            <person name="Voycik J.J."/>
            <person name="Sathe G.M."/>
            <person name="Vassilev V."/>
        </authorList>
    </citation>
    <scope>NUCLEOTIDE SEQUENCE [LARGE SCALE GENOMIC DNA]</scope>
    <source>
        <strain>Oka varicella vaccine VarilRix (V-Oka-GSK)</strain>
        <strain>Oka varicella vaccine Varivax (V-Oka-Merck)</strain>
    </source>
</reference>
<accession>Q77NP3</accession>
<gene>
    <name type="ORF">ORF49</name>
</gene>